<accession>O42250</accession>
<sequence>MTGREEATDEKPKVKLYPSFGIDKSRLNGSGFRSKGFAITDLLGLESELQPHQSGPGAGPNGEGQSAAVGGFSFPGGSLPLGLGFLCSLAAQQPPGAPCFLPSHIPLLQSRTESHFMQNLEQQRDVYSDDDCLSGDRNDGKNSGNSQKRKKRRHRTVFTSHQLEELEKAFNEAHYPDVYAREMLAMKTELPEDRIQVWFQNRRAKWRKREKCWGRSSVMAEYGLYGAMVRHSIPLPESIINSAKSGMMGSCAPWLLGEPAGMHKKSMEIVKKAPGTPESTHSDTYSEEHKGKDSDTTWSSGANGADDSEDMAIDLSSTSKQENKSTLKRSPPRTENSSDSENES</sequence>
<name>VSX1_DANRE</name>
<evidence type="ECO:0000255" key="1">
    <source>
        <dbReference type="PROSITE-ProRule" id="PRU00108"/>
    </source>
</evidence>
<evidence type="ECO:0000255" key="2">
    <source>
        <dbReference type="PROSITE-ProRule" id="PRU00829"/>
    </source>
</evidence>
<evidence type="ECO:0000256" key="3">
    <source>
        <dbReference type="SAM" id="MobiDB-lite"/>
    </source>
</evidence>
<evidence type="ECO:0000269" key="4">
    <source>
    </source>
</evidence>
<evidence type="ECO:0000305" key="5"/>
<feature type="chain" id="PRO_0000049358" description="Visual system homeobox 1">
    <location>
        <begin position="1"/>
        <end position="344"/>
    </location>
</feature>
<feature type="domain" description="CVC" evidence="2">
    <location>
        <begin position="211"/>
        <end position="268"/>
    </location>
</feature>
<feature type="DNA-binding region" description="Homeobox" evidence="1">
    <location>
        <begin position="151"/>
        <end position="210"/>
    </location>
</feature>
<feature type="region of interest" description="Octapeptide motif">
    <location>
        <begin position="37"/>
        <end position="44"/>
    </location>
</feature>
<feature type="region of interest" description="Disordered" evidence="3">
    <location>
        <begin position="49"/>
        <end position="70"/>
    </location>
</feature>
<feature type="region of interest" description="Disordered" evidence="3">
    <location>
        <begin position="127"/>
        <end position="156"/>
    </location>
</feature>
<feature type="region of interest" description="Disordered" evidence="3">
    <location>
        <begin position="273"/>
        <end position="344"/>
    </location>
</feature>
<feature type="short sequence motif" description="Nuclear localization signal" evidence="4">
    <location>
        <begin position="147"/>
        <end position="151"/>
    </location>
</feature>
<feature type="compositionally biased region" description="Basic residues" evidence="3">
    <location>
        <begin position="147"/>
        <end position="156"/>
    </location>
</feature>
<feature type="compositionally biased region" description="Basic and acidic residues" evidence="3">
    <location>
        <begin position="280"/>
        <end position="295"/>
    </location>
</feature>
<proteinExistence type="evidence at protein level"/>
<keyword id="KW-0217">Developmental protein</keyword>
<keyword id="KW-0238">DNA-binding</keyword>
<keyword id="KW-0371">Homeobox</keyword>
<keyword id="KW-0539">Nucleus</keyword>
<keyword id="KW-1185">Reference proteome</keyword>
<keyword id="KW-0716">Sensory transduction</keyword>
<keyword id="KW-0804">Transcription</keyword>
<keyword id="KW-0805">Transcription regulation</keyword>
<keyword id="KW-0844">Vision</keyword>
<comment type="function">
    <text>May be involved in maintenance as well as cellular differentiation of retinal interneurons, such as bipolar cells. May play a role in establishing interneuronal cell classes in nonsensory as well as sensory systems.</text>
</comment>
<comment type="subunit">
    <text evidence="4">Interacts with UBE2I.</text>
</comment>
<comment type="subcellular location">
    <subcellularLocation>
        <location evidence="1 4">Nucleus</location>
    </subcellularLocation>
</comment>
<comment type="tissue specificity">
    <text>Highly expressed in the central and outer tiers of the inner nuclear layer of the retina.</text>
</comment>
<comment type="developmental stage">
    <text>Significant levels were first detected at the 14-somite stage (16 hours post-fertization; hpf) and increased by the prim-11 stage (28 hpf). At 16 hpf expression is observed in a small subset of neurons in the spinal cord and at 18 hpf in the developing hindbrain. At 28-32 hpf, significant levels of expression is seen in presumptive neurons along the rostral-caudal axis of the hindbrain and the spinal cord. During later stages of development expression is restricted to the developing retina and no longer detected in the hindbrain or spinal cord.</text>
</comment>
<comment type="domain">
    <text>The NLS interacts with UBE2I.</text>
</comment>
<comment type="similarity">
    <text evidence="5">Belongs to the paired homeobox family.</text>
</comment>
<protein>
    <recommendedName>
        <fullName>Visual system homeobox 1</fullName>
    </recommendedName>
    <alternativeName>
        <fullName>Transcription factor VSX1</fullName>
    </alternativeName>
</protein>
<gene>
    <name type="primary">vsx1</name>
</gene>
<dbReference type="EMBL" id="AF025348">
    <property type="protein sequence ID" value="AAB71611.2"/>
    <property type="molecule type" value="mRNA"/>
</dbReference>
<dbReference type="RefSeq" id="NP_571408.1">
    <property type="nucleotide sequence ID" value="NM_131333.1"/>
</dbReference>
<dbReference type="SMR" id="O42250"/>
<dbReference type="FunCoup" id="O42250">
    <property type="interactions" value="38"/>
</dbReference>
<dbReference type="STRING" id="7955.ENSDARP00000095102"/>
<dbReference type="PaxDb" id="7955-ENSDARP00000073224"/>
<dbReference type="GeneID" id="30598"/>
<dbReference type="KEGG" id="dre:30598"/>
<dbReference type="AGR" id="ZFIN:ZDB-GENE-990415-205"/>
<dbReference type="CTD" id="30813"/>
<dbReference type="ZFIN" id="ZDB-GENE-990415-205">
    <property type="gene designation" value="vsx1"/>
</dbReference>
<dbReference type="eggNOG" id="KOG0494">
    <property type="taxonomic scope" value="Eukaryota"/>
</dbReference>
<dbReference type="InParanoid" id="O42250"/>
<dbReference type="OrthoDB" id="6159439at2759"/>
<dbReference type="PhylomeDB" id="O42250"/>
<dbReference type="PRO" id="PR:O42250"/>
<dbReference type="Proteomes" id="UP000000437">
    <property type="component" value="Alternate scaffold 17"/>
</dbReference>
<dbReference type="Proteomes" id="UP000000437">
    <property type="component" value="Chromosome 17"/>
</dbReference>
<dbReference type="GO" id="GO:0005634">
    <property type="term" value="C:nucleus"/>
    <property type="evidence" value="ECO:0000318"/>
    <property type="project" value="GO_Central"/>
</dbReference>
<dbReference type="GO" id="GO:0003682">
    <property type="term" value="F:chromatin binding"/>
    <property type="evidence" value="ECO:0000314"/>
    <property type="project" value="ZFIN"/>
</dbReference>
<dbReference type="GO" id="GO:0000981">
    <property type="term" value="F:DNA-binding transcription factor activity, RNA polymerase II-specific"/>
    <property type="evidence" value="ECO:0007669"/>
    <property type="project" value="InterPro"/>
</dbReference>
<dbReference type="GO" id="GO:0000976">
    <property type="term" value="F:transcription cis-regulatory region binding"/>
    <property type="evidence" value="ECO:0000314"/>
    <property type="project" value="ZFIN"/>
</dbReference>
<dbReference type="GO" id="GO:0048318">
    <property type="term" value="P:axial mesoderm development"/>
    <property type="evidence" value="ECO:0000315"/>
    <property type="project" value="ZFIN"/>
</dbReference>
<dbReference type="GO" id="GO:0030900">
    <property type="term" value="P:forebrain development"/>
    <property type="evidence" value="ECO:0000315"/>
    <property type="project" value="ZFIN"/>
</dbReference>
<dbReference type="GO" id="GO:0048329">
    <property type="term" value="P:negative regulation of axial mesodermal cell fate specification"/>
    <property type="evidence" value="ECO:0000315"/>
    <property type="project" value="ZFIN"/>
</dbReference>
<dbReference type="GO" id="GO:0045892">
    <property type="term" value="P:negative regulation of DNA-templated transcription"/>
    <property type="evidence" value="ECO:0000314"/>
    <property type="project" value="ZFIN"/>
</dbReference>
<dbReference type="GO" id="GO:0048339">
    <property type="term" value="P:paraxial mesoderm development"/>
    <property type="evidence" value="ECO:0000315"/>
    <property type="project" value="ZFIN"/>
</dbReference>
<dbReference type="GO" id="GO:0048348">
    <property type="term" value="P:paraxial mesodermal cell fate specification"/>
    <property type="evidence" value="ECO:0000315"/>
    <property type="project" value="ZFIN"/>
</dbReference>
<dbReference type="GO" id="GO:0021501">
    <property type="term" value="P:prechordal plate formation"/>
    <property type="evidence" value="ECO:0000315"/>
    <property type="project" value="ZFIN"/>
</dbReference>
<dbReference type="GO" id="GO:0006355">
    <property type="term" value="P:regulation of DNA-templated transcription"/>
    <property type="evidence" value="ECO:0000318"/>
    <property type="project" value="GO_Central"/>
</dbReference>
<dbReference type="GO" id="GO:0007601">
    <property type="term" value="P:visual perception"/>
    <property type="evidence" value="ECO:0007669"/>
    <property type="project" value="UniProtKB-KW"/>
</dbReference>
<dbReference type="CDD" id="cd00086">
    <property type="entry name" value="homeodomain"/>
    <property type="match status" value="1"/>
</dbReference>
<dbReference type="FunFam" id="1.10.10.60:FF:000065">
    <property type="entry name" value="Visual system homeobox 1"/>
    <property type="match status" value="1"/>
</dbReference>
<dbReference type="Gene3D" id="1.10.10.60">
    <property type="entry name" value="Homeodomain-like"/>
    <property type="match status" value="1"/>
</dbReference>
<dbReference type="InterPro" id="IPR023339">
    <property type="entry name" value="CVC"/>
</dbReference>
<dbReference type="InterPro" id="IPR001356">
    <property type="entry name" value="HD"/>
</dbReference>
<dbReference type="InterPro" id="IPR017970">
    <property type="entry name" value="Homeobox_CS"/>
</dbReference>
<dbReference type="InterPro" id="IPR051775">
    <property type="entry name" value="Homeobox_domain"/>
</dbReference>
<dbReference type="InterPro" id="IPR009057">
    <property type="entry name" value="Homeodomain-like_sf"/>
</dbReference>
<dbReference type="PANTHER" id="PTHR24323">
    <property type="entry name" value="CEH-10 HOMEODOMAIN-CONTAINING HOMOLOG"/>
    <property type="match status" value="1"/>
</dbReference>
<dbReference type="PANTHER" id="PTHR24323:SF3">
    <property type="entry name" value="VISUAL SYSTEM HOMEOBOX 1"/>
    <property type="match status" value="1"/>
</dbReference>
<dbReference type="Pfam" id="PF00046">
    <property type="entry name" value="Homeodomain"/>
    <property type="match status" value="1"/>
</dbReference>
<dbReference type="SMART" id="SM00389">
    <property type="entry name" value="HOX"/>
    <property type="match status" value="1"/>
</dbReference>
<dbReference type="SUPFAM" id="SSF46689">
    <property type="entry name" value="Homeodomain-like"/>
    <property type="match status" value="1"/>
</dbReference>
<dbReference type="PROSITE" id="PS51496">
    <property type="entry name" value="CVC"/>
    <property type="match status" value="1"/>
</dbReference>
<dbReference type="PROSITE" id="PS00027">
    <property type="entry name" value="HOMEOBOX_1"/>
    <property type="match status" value="1"/>
</dbReference>
<dbReference type="PROSITE" id="PS50071">
    <property type="entry name" value="HOMEOBOX_2"/>
    <property type="match status" value="1"/>
</dbReference>
<reference key="1">
    <citation type="journal article" date="1998" name="Dev. Genet.">
        <title>Cloning of zebrafish vsx1: expression of a paired-like homeobox gene during CNS development.</title>
        <authorList>
            <person name="Passini M.A."/>
            <person name="Kurtzman A.L."/>
            <person name="Canger A.K."/>
            <person name="Asch W.S."/>
            <person name="Wray G.A."/>
            <person name="Raymond P.A."/>
            <person name="Schechter N."/>
        </authorList>
    </citation>
    <scope>NUCLEOTIDE SEQUENCE [MRNA]</scope>
    <source>
        <tissue>Retina</tissue>
    </source>
</reference>
<reference key="2">
    <citation type="journal article" date="2001" name="Proc. Natl. Acad. Sci. U.S.A.">
        <title>Ubc9 interacts with a nuclear localization signal and mediates nuclear localization of the paired-like homeobox protein Vsx-1 independent of SUMO-1 modification.</title>
        <authorList>
            <person name="Kurtzman A.L."/>
            <person name="Schechter N."/>
        </authorList>
    </citation>
    <scope>INTERACTION WITH UBE2I</scope>
    <scope>SUBCELLULAR LOCATION</scope>
    <scope>NUCLEAR LOCALIZATION SIGNAL</scope>
</reference>
<organism>
    <name type="scientific">Danio rerio</name>
    <name type="common">Zebrafish</name>
    <name type="synonym">Brachydanio rerio</name>
    <dbReference type="NCBI Taxonomy" id="7955"/>
    <lineage>
        <taxon>Eukaryota</taxon>
        <taxon>Metazoa</taxon>
        <taxon>Chordata</taxon>
        <taxon>Craniata</taxon>
        <taxon>Vertebrata</taxon>
        <taxon>Euteleostomi</taxon>
        <taxon>Actinopterygii</taxon>
        <taxon>Neopterygii</taxon>
        <taxon>Teleostei</taxon>
        <taxon>Ostariophysi</taxon>
        <taxon>Cypriniformes</taxon>
        <taxon>Danionidae</taxon>
        <taxon>Danioninae</taxon>
        <taxon>Danio</taxon>
    </lineage>
</organism>